<protein>
    <recommendedName>
        <fullName evidence="1">Phosphopantetheine adenylyltransferase</fullName>
        <ecNumber evidence="1">2.7.7.3</ecNumber>
    </recommendedName>
    <alternativeName>
        <fullName evidence="1">Dephospho-CoA pyrophosphorylase</fullName>
    </alternativeName>
    <alternativeName>
        <fullName evidence="1">Pantetheine-phosphate adenylyltransferase</fullName>
        <shortName evidence="1">PPAT</shortName>
    </alternativeName>
</protein>
<dbReference type="EC" id="2.7.7.3" evidence="1"/>
<dbReference type="EMBL" id="CP000319">
    <property type="protein sequence ID" value="ABE62580.1"/>
    <property type="molecule type" value="Genomic_DNA"/>
</dbReference>
<dbReference type="RefSeq" id="WP_011510262.1">
    <property type="nucleotide sequence ID" value="NC_007964.1"/>
</dbReference>
<dbReference type="SMR" id="Q1QMG7"/>
<dbReference type="STRING" id="323097.Nham_1766"/>
<dbReference type="KEGG" id="nha:Nham_1766"/>
<dbReference type="eggNOG" id="COG0669">
    <property type="taxonomic scope" value="Bacteria"/>
</dbReference>
<dbReference type="HOGENOM" id="CLU_100149_0_1_5"/>
<dbReference type="OrthoDB" id="9806661at2"/>
<dbReference type="UniPathway" id="UPA00241">
    <property type="reaction ID" value="UER00355"/>
</dbReference>
<dbReference type="Proteomes" id="UP000001953">
    <property type="component" value="Chromosome"/>
</dbReference>
<dbReference type="GO" id="GO:0005737">
    <property type="term" value="C:cytoplasm"/>
    <property type="evidence" value="ECO:0007669"/>
    <property type="project" value="UniProtKB-SubCell"/>
</dbReference>
<dbReference type="GO" id="GO:0005524">
    <property type="term" value="F:ATP binding"/>
    <property type="evidence" value="ECO:0007669"/>
    <property type="project" value="UniProtKB-KW"/>
</dbReference>
<dbReference type="GO" id="GO:0004595">
    <property type="term" value="F:pantetheine-phosphate adenylyltransferase activity"/>
    <property type="evidence" value="ECO:0007669"/>
    <property type="project" value="UniProtKB-UniRule"/>
</dbReference>
<dbReference type="GO" id="GO:0015937">
    <property type="term" value="P:coenzyme A biosynthetic process"/>
    <property type="evidence" value="ECO:0007669"/>
    <property type="project" value="UniProtKB-UniRule"/>
</dbReference>
<dbReference type="CDD" id="cd02163">
    <property type="entry name" value="PPAT"/>
    <property type="match status" value="1"/>
</dbReference>
<dbReference type="Gene3D" id="3.40.50.620">
    <property type="entry name" value="HUPs"/>
    <property type="match status" value="1"/>
</dbReference>
<dbReference type="HAMAP" id="MF_00151">
    <property type="entry name" value="PPAT_bact"/>
    <property type="match status" value="1"/>
</dbReference>
<dbReference type="InterPro" id="IPR004821">
    <property type="entry name" value="Cyt_trans-like"/>
</dbReference>
<dbReference type="InterPro" id="IPR001980">
    <property type="entry name" value="PPAT"/>
</dbReference>
<dbReference type="InterPro" id="IPR014729">
    <property type="entry name" value="Rossmann-like_a/b/a_fold"/>
</dbReference>
<dbReference type="NCBIfam" id="TIGR01510">
    <property type="entry name" value="coaD_prev_kdtB"/>
    <property type="match status" value="1"/>
</dbReference>
<dbReference type="NCBIfam" id="TIGR00125">
    <property type="entry name" value="cyt_tran_rel"/>
    <property type="match status" value="1"/>
</dbReference>
<dbReference type="PANTHER" id="PTHR21342">
    <property type="entry name" value="PHOSPHOPANTETHEINE ADENYLYLTRANSFERASE"/>
    <property type="match status" value="1"/>
</dbReference>
<dbReference type="PANTHER" id="PTHR21342:SF1">
    <property type="entry name" value="PHOSPHOPANTETHEINE ADENYLYLTRANSFERASE"/>
    <property type="match status" value="1"/>
</dbReference>
<dbReference type="Pfam" id="PF01467">
    <property type="entry name" value="CTP_transf_like"/>
    <property type="match status" value="1"/>
</dbReference>
<dbReference type="PRINTS" id="PR01020">
    <property type="entry name" value="LPSBIOSNTHSS"/>
</dbReference>
<dbReference type="SUPFAM" id="SSF52374">
    <property type="entry name" value="Nucleotidylyl transferase"/>
    <property type="match status" value="1"/>
</dbReference>
<name>COAD_NITHX</name>
<reference key="1">
    <citation type="submission" date="2006-03" db="EMBL/GenBank/DDBJ databases">
        <title>Complete sequence of chromosome of Nitrobacter hamburgensis X14.</title>
        <authorList>
            <consortium name="US DOE Joint Genome Institute"/>
            <person name="Copeland A."/>
            <person name="Lucas S."/>
            <person name="Lapidus A."/>
            <person name="Barry K."/>
            <person name="Detter J.C."/>
            <person name="Glavina del Rio T."/>
            <person name="Hammon N."/>
            <person name="Israni S."/>
            <person name="Dalin E."/>
            <person name="Tice H."/>
            <person name="Pitluck S."/>
            <person name="Chain P."/>
            <person name="Malfatti S."/>
            <person name="Shin M."/>
            <person name="Vergez L."/>
            <person name="Schmutz J."/>
            <person name="Larimer F."/>
            <person name="Land M."/>
            <person name="Hauser L."/>
            <person name="Kyrpides N."/>
            <person name="Ivanova N."/>
            <person name="Ward B."/>
            <person name="Arp D."/>
            <person name="Klotz M."/>
            <person name="Stein L."/>
            <person name="O'Mullan G."/>
            <person name="Starkenburg S."/>
            <person name="Sayavedra L."/>
            <person name="Poret-Peterson A.T."/>
            <person name="Gentry M.E."/>
            <person name="Bruce D."/>
            <person name="Richardson P."/>
        </authorList>
    </citation>
    <scope>NUCLEOTIDE SEQUENCE [LARGE SCALE GENOMIC DNA]</scope>
    <source>
        <strain>DSM 10229 / NCIMB 13809 / X14</strain>
    </source>
</reference>
<proteinExistence type="inferred from homology"/>
<comment type="function">
    <text evidence="1">Reversibly transfers an adenylyl group from ATP to 4'-phosphopantetheine, yielding dephospho-CoA (dPCoA) and pyrophosphate.</text>
</comment>
<comment type="catalytic activity">
    <reaction evidence="1">
        <text>(R)-4'-phosphopantetheine + ATP + H(+) = 3'-dephospho-CoA + diphosphate</text>
        <dbReference type="Rhea" id="RHEA:19801"/>
        <dbReference type="ChEBI" id="CHEBI:15378"/>
        <dbReference type="ChEBI" id="CHEBI:30616"/>
        <dbReference type="ChEBI" id="CHEBI:33019"/>
        <dbReference type="ChEBI" id="CHEBI:57328"/>
        <dbReference type="ChEBI" id="CHEBI:61723"/>
        <dbReference type="EC" id="2.7.7.3"/>
    </reaction>
</comment>
<comment type="cofactor">
    <cofactor evidence="1">
        <name>Mg(2+)</name>
        <dbReference type="ChEBI" id="CHEBI:18420"/>
    </cofactor>
</comment>
<comment type="pathway">
    <text evidence="1">Cofactor biosynthesis; coenzyme A biosynthesis; CoA from (R)-pantothenate: step 4/5.</text>
</comment>
<comment type="subunit">
    <text evidence="1">Homohexamer.</text>
</comment>
<comment type="subcellular location">
    <subcellularLocation>
        <location evidence="1">Cytoplasm</location>
    </subcellularLocation>
</comment>
<comment type="similarity">
    <text evidence="1">Belongs to the bacterial CoaD family.</text>
</comment>
<keyword id="KW-0067">ATP-binding</keyword>
<keyword id="KW-0173">Coenzyme A biosynthesis</keyword>
<keyword id="KW-0963">Cytoplasm</keyword>
<keyword id="KW-0460">Magnesium</keyword>
<keyword id="KW-0547">Nucleotide-binding</keyword>
<keyword id="KW-0548">Nucleotidyltransferase</keyword>
<keyword id="KW-1185">Reference proteome</keyword>
<keyword id="KW-0808">Transferase</keyword>
<sequence length="165" mass="17197">MSRVALYPGSFDPVTNGHVDVVRHAVVLCDQLIVAIGVHPGKTPLFPAGERLAMVRSVFAPVAEKAGCAFDCTTYDDLTVAAAQKAGATILIRGLRDGTDLDYEMQIAGMNETMAPGVHTVFVPASPGVRPITATLVRQIAAMGGDVSAFVPQSVASSLKTKFAG</sequence>
<feature type="chain" id="PRO_1000011188" description="Phosphopantetheine adenylyltransferase">
    <location>
        <begin position="1"/>
        <end position="165"/>
    </location>
</feature>
<feature type="binding site" evidence="1">
    <location>
        <begin position="10"/>
        <end position="11"/>
    </location>
    <ligand>
        <name>ATP</name>
        <dbReference type="ChEBI" id="CHEBI:30616"/>
    </ligand>
</feature>
<feature type="binding site" evidence="1">
    <location>
        <position position="10"/>
    </location>
    <ligand>
        <name>substrate</name>
    </ligand>
</feature>
<feature type="binding site" evidence="1">
    <location>
        <position position="18"/>
    </location>
    <ligand>
        <name>ATP</name>
        <dbReference type="ChEBI" id="CHEBI:30616"/>
    </ligand>
</feature>
<feature type="binding site" evidence="1">
    <location>
        <position position="42"/>
    </location>
    <ligand>
        <name>substrate</name>
    </ligand>
</feature>
<feature type="binding site" evidence="1">
    <location>
        <position position="79"/>
    </location>
    <ligand>
        <name>substrate</name>
    </ligand>
</feature>
<feature type="binding site" evidence="1">
    <location>
        <position position="93"/>
    </location>
    <ligand>
        <name>substrate</name>
    </ligand>
</feature>
<feature type="binding site" evidence="1">
    <location>
        <begin position="94"/>
        <end position="96"/>
    </location>
    <ligand>
        <name>ATP</name>
        <dbReference type="ChEBI" id="CHEBI:30616"/>
    </ligand>
</feature>
<feature type="binding site" evidence="1">
    <location>
        <position position="104"/>
    </location>
    <ligand>
        <name>ATP</name>
        <dbReference type="ChEBI" id="CHEBI:30616"/>
    </ligand>
</feature>
<feature type="binding site" evidence="1">
    <location>
        <begin position="129"/>
        <end position="135"/>
    </location>
    <ligand>
        <name>ATP</name>
        <dbReference type="ChEBI" id="CHEBI:30616"/>
    </ligand>
</feature>
<feature type="site" description="Transition state stabilizer" evidence="1">
    <location>
        <position position="18"/>
    </location>
</feature>
<organism>
    <name type="scientific">Nitrobacter hamburgensis (strain DSM 10229 / NCIMB 13809 / X14)</name>
    <dbReference type="NCBI Taxonomy" id="323097"/>
    <lineage>
        <taxon>Bacteria</taxon>
        <taxon>Pseudomonadati</taxon>
        <taxon>Pseudomonadota</taxon>
        <taxon>Alphaproteobacteria</taxon>
        <taxon>Hyphomicrobiales</taxon>
        <taxon>Nitrobacteraceae</taxon>
        <taxon>Nitrobacter</taxon>
    </lineage>
</organism>
<accession>Q1QMG7</accession>
<gene>
    <name evidence="1" type="primary">coaD</name>
    <name type="ordered locus">Nham_1766</name>
</gene>
<evidence type="ECO:0000255" key="1">
    <source>
        <dbReference type="HAMAP-Rule" id="MF_00151"/>
    </source>
</evidence>